<gene>
    <name evidence="1" type="primary">erpA</name>
    <name type="ordered locus">XC_0500</name>
</gene>
<evidence type="ECO:0000255" key="1">
    <source>
        <dbReference type="HAMAP-Rule" id="MF_01380"/>
    </source>
</evidence>
<reference key="1">
    <citation type="journal article" date="2005" name="Genome Res.">
        <title>Comparative and functional genomic analyses of the pathogenicity of phytopathogen Xanthomonas campestris pv. campestris.</title>
        <authorList>
            <person name="Qian W."/>
            <person name="Jia Y."/>
            <person name="Ren S.-X."/>
            <person name="He Y.-Q."/>
            <person name="Feng J.-X."/>
            <person name="Lu L.-F."/>
            <person name="Sun Q."/>
            <person name="Ying G."/>
            <person name="Tang D.-J."/>
            <person name="Tang H."/>
            <person name="Wu W."/>
            <person name="Hao P."/>
            <person name="Wang L."/>
            <person name="Jiang B.-L."/>
            <person name="Zeng S."/>
            <person name="Gu W.-Y."/>
            <person name="Lu G."/>
            <person name="Rong L."/>
            <person name="Tian Y."/>
            <person name="Yao Z."/>
            <person name="Fu G."/>
            <person name="Chen B."/>
            <person name="Fang R."/>
            <person name="Qiang B."/>
            <person name="Chen Z."/>
            <person name="Zhao G.-P."/>
            <person name="Tang J.-L."/>
            <person name="He C."/>
        </authorList>
    </citation>
    <scope>NUCLEOTIDE SEQUENCE [LARGE SCALE GENOMIC DNA]</scope>
    <source>
        <strain>8004</strain>
    </source>
</reference>
<feature type="chain" id="PRO_0000311577" description="Iron-sulfur cluster insertion protein ErpA">
    <location>
        <begin position="1"/>
        <end position="128"/>
    </location>
</feature>
<feature type="binding site" evidence="1">
    <location>
        <position position="56"/>
    </location>
    <ligand>
        <name>iron-sulfur cluster</name>
        <dbReference type="ChEBI" id="CHEBI:30408"/>
    </ligand>
</feature>
<feature type="binding site" evidence="1">
    <location>
        <position position="120"/>
    </location>
    <ligand>
        <name>iron-sulfur cluster</name>
        <dbReference type="ChEBI" id="CHEBI:30408"/>
    </ligand>
</feature>
<feature type="binding site" evidence="1">
    <location>
        <position position="122"/>
    </location>
    <ligand>
        <name>iron-sulfur cluster</name>
        <dbReference type="ChEBI" id="CHEBI:30408"/>
    </ligand>
</feature>
<keyword id="KW-0408">Iron</keyword>
<keyword id="KW-0411">Iron-sulfur</keyword>
<keyword id="KW-0479">Metal-binding</keyword>
<comment type="function">
    <text evidence="1">Required for insertion of 4Fe-4S clusters for at least IspG.</text>
</comment>
<comment type="cofactor">
    <cofactor evidence="1">
        <name>iron-sulfur cluster</name>
        <dbReference type="ChEBI" id="CHEBI:30408"/>
    </cofactor>
    <text evidence="1">Binds 1 iron-sulfur cluster per subunit.</text>
</comment>
<comment type="subunit">
    <text evidence="1">Homodimer.</text>
</comment>
<comment type="similarity">
    <text evidence="1">Belongs to the HesB/IscA family.</text>
</comment>
<organism>
    <name type="scientific">Xanthomonas campestris pv. campestris (strain 8004)</name>
    <dbReference type="NCBI Taxonomy" id="314565"/>
    <lineage>
        <taxon>Bacteria</taxon>
        <taxon>Pseudomonadati</taxon>
        <taxon>Pseudomonadota</taxon>
        <taxon>Gammaproteobacteria</taxon>
        <taxon>Lysobacterales</taxon>
        <taxon>Lysobacteraceae</taxon>
        <taxon>Xanthomonas</taxon>
    </lineage>
</organism>
<accession>Q4UZE2</accession>
<name>ERPA_XANC8</name>
<dbReference type="EMBL" id="CP000050">
    <property type="protein sequence ID" value="AAY47581.1"/>
    <property type="molecule type" value="Genomic_DNA"/>
</dbReference>
<dbReference type="RefSeq" id="WP_011035737.1">
    <property type="nucleotide sequence ID" value="NZ_CP155948.1"/>
</dbReference>
<dbReference type="SMR" id="Q4UZE2"/>
<dbReference type="GeneID" id="58011800"/>
<dbReference type="KEGG" id="xcb:XC_0500"/>
<dbReference type="HOGENOM" id="CLU_069054_5_3_6"/>
<dbReference type="Proteomes" id="UP000000420">
    <property type="component" value="Chromosome"/>
</dbReference>
<dbReference type="GO" id="GO:0005829">
    <property type="term" value="C:cytosol"/>
    <property type="evidence" value="ECO:0007669"/>
    <property type="project" value="TreeGrafter"/>
</dbReference>
<dbReference type="GO" id="GO:0051537">
    <property type="term" value="F:2 iron, 2 sulfur cluster binding"/>
    <property type="evidence" value="ECO:0007669"/>
    <property type="project" value="UniProtKB-ARBA"/>
</dbReference>
<dbReference type="GO" id="GO:0051539">
    <property type="term" value="F:4 iron, 4 sulfur cluster binding"/>
    <property type="evidence" value="ECO:0007669"/>
    <property type="project" value="TreeGrafter"/>
</dbReference>
<dbReference type="GO" id="GO:0005506">
    <property type="term" value="F:iron ion binding"/>
    <property type="evidence" value="ECO:0007669"/>
    <property type="project" value="UniProtKB-UniRule"/>
</dbReference>
<dbReference type="GO" id="GO:0016226">
    <property type="term" value="P:iron-sulfur cluster assembly"/>
    <property type="evidence" value="ECO:0007669"/>
    <property type="project" value="UniProtKB-UniRule"/>
</dbReference>
<dbReference type="FunFam" id="2.60.300.12:FF:000002">
    <property type="entry name" value="Iron-sulfur cluster insertion protein ErpA"/>
    <property type="match status" value="1"/>
</dbReference>
<dbReference type="Gene3D" id="2.60.300.12">
    <property type="entry name" value="HesB-like domain"/>
    <property type="match status" value="1"/>
</dbReference>
<dbReference type="HAMAP" id="MF_01380">
    <property type="entry name" value="Fe_S_insert_ErpA"/>
    <property type="match status" value="1"/>
</dbReference>
<dbReference type="InterPro" id="IPR000361">
    <property type="entry name" value="FeS_biogenesis"/>
</dbReference>
<dbReference type="InterPro" id="IPR016092">
    <property type="entry name" value="FeS_cluster_insertion"/>
</dbReference>
<dbReference type="InterPro" id="IPR017870">
    <property type="entry name" value="FeS_cluster_insertion_CS"/>
</dbReference>
<dbReference type="InterPro" id="IPR023063">
    <property type="entry name" value="FeS_cluster_insertion_RrpA"/>
</dbReference>
<dbReference type="InterPro" id="IPR035903">
    <property type="entry name" value="HesB-like_dom_sf"/>
</dbReference>
<dbReference type="NCBIfam" id="TIGR00049">
    <property type="entry name" value="iron-sulfur cluster assembly accessory protein"/>
    <property type="match status" value="1"/>
</dbReference>
<dbReference type="NCBIfam" id="NF010147">
    <property type="entry name" value="PRK13623.1"/>
    <property type="match status" value="1"/>
</dbReference>
<dbReference type="PANTHER" id="PTHR43011">
    <property type="entry name" value="IRON-SULFUR CLUSTER ASSEMBLY 2 HOMOLOG, MITOCHONDRIAL"/>
    <property type="match status" value="1"/>
</dbReference>
<dbReference type="PANTHER" id="PTHR43011:SF1">
    <property type="entry name" value="IRON-SULFUR CLUSTER ASSEMBLY 2 HOMOLOG, MITOCHONDRIAL"/>
    <property type="match status" value="1"/>
</dbReference>
<dbReference type="Pfam" id="PF01521">
    <property type="entry name" value="Fe-S_biosyn"/>
    <property type="match status" value="1"/>
</dbReference>
<dbReference type="SUPFAM" id="SSF89360">
    <property type="entry name" value="HesB-like domain"/>
    <property type="match status" value="1"/>
</dbReference>
<dbReference type="PROSITE" id="PS01152">
    <property type="entry name" value="HESB"/>
    <property type="match status" value="1"/>
</dbReference>
<protein>
    <recommendedName>
        <fullName evidence="1">Iron-sulfur cluster insertion protein ErpA</fullName>
    </recommendedName>
</protein>
<sequence length="128" mass="13634">MSTLVSLPTAAPAPDYQSIDRPLNFSNAAAAKVRELIQEEGNAELALRVYIQGGGCSGFQYGFEFDENRAEDDLAVATDGVTLLVDPLSLQYLMGAEVDYTESLTGAQFVIRNPNAKTTCGCGSSFSV</sequence>
<proteinExistence type="inferred from homology"/>